<organism>
    <name type="scientific">Homo sapiens</name>
    <name type="common">Human</name>
    <dbReference type="NCBI Taxonomy" id="9606"/>
    <lineage>
        <taxon>Eukaryota</taxon>
        <taxon>Metazoa</taxon>
        <taxon>Chordata</taxon>
        <taxon>Craniata</taxon>
        <taxon>Vertebrata</taxon>
        <taxon>Euteleostomi</taxon>
        <taxon>Mammalia</taxon>
        <taxon>Eutheria</taxon>
        <taxon>Euarchontoglires</taxon>
        <taxon>Primates</taxon>
        <taxon>Haplorrhini</taxon>
        <taxon>Catarrhini</taxon>
        <taxon>Hominidae</taxon>
        <taxon>Homo</taxon>
    </lineage>
</organism>
<feature type="chain" id="PRO_0000030329" description="Nuclear factor of activated T-cells, cytoplasmic 1">
    <location>
        <begin position="1"/>
        <end position="943"/>
    </location>
</feature>
<feature type="repeat" description="1">
    <location>
        <begin position="203"/>
        <end position="219"/>
    </location>
</feature>
<feature type="repeat" description="2">
    <location>
        <begin position="233"/>
        <end position="249"/>
    </location>
</feature>
<feature type="repeat" description="3">
    <location>
        <begin position="282"/>
        <end position="298"/>
    </location>
</feature>
<feature type="domain" description="RHD" evidence="2">
    <location>
        <begin position="410"/>
        <end position="592"/>
    </location>
</feature>
<feature type="DNA-binding region" evidence="12">
    <location>
        <begin position="439"/>
        <end position="446"/>
    </location>
</feature>
<feature type="region of interest" description="Disordered" evidence="3">
    <location>
        <begin position="22"/>
        <end position="48"/>
    </location>
</feature>
<feature type="region of interest" description="Calcineurin-binding">
    <location>
        <begin position="118"/>
        <end position="123"/>
    </location>
</feature>
<feature type="region of interest" description="Transactivation domain A (TAD-A)">
    <location>
        <begin position="126"/>
        <end position="218"/>
    </location>
</feature>
<feature type="region of interest" description="Disordered" evidence="3">
    <location>
        <begin position="200"/>
        <end position="298"/>
    </location>
</feature>
<feature type="region of interest" description="3 X SP repeats">
    <location>
        <begin position="203"/>
        <end position="298"/>
    </location>
</feature>
<feature type="region of interest" description="Transactivation domain B (TAD-B)">
    <location>
        <begin position="703"/>
        <end position="943"/>
    </location>
</feature>
<feature type="region of interest" description="Disordered" evidence="3">
    <location>
        <begin position="787"/>
        <end position="912"/>
    </location>
</feature>
<feature type="short sequence motif" description="Nuclear localization signal">
    <location>
        <begin position="265"/>
        <end position="267"/>
    </location>
</feature>
<feature type="short sequence motif" description="Nuclear export signal">
    <location>
        <begin position="310"/>
        <end position="321"/>
    </location>
</feature>
<feature type="short sequence motif" description="Nuclear localization signal">
    <location>
        <begin position="682"/>
        <end position="684"/>
    </location>
</feature>
<feature type="short sequence motif" description="Nuclear export signal">
    <location>
        <begin position="924"/>
        <end position="933"/>
    </location>
</feature>
<feature type="compositionally biased region" description="Polar residues" evidence="3">
    <location>
        <begin position="201"/>
        <end position="214"/>
    </location>
</feature>
<feature type="compositionally biased region" description="Polar residues" evidence="3">
    <location>
        <begin position="236"/>
        <end position="248"/>
    </location>
</feature>
<feature type="compositionally biased region" description="Pro residues" evidence="3">
    <location>
        <begin position="276"/>
        <end position="288"/>
    </location>
</feature>
<feature type="compositionally biased region" description="Pro residues" evidence="3">
    <location>
        <begin position="846"/>
        <end position="855"/>
    </location>
</feature>
<feature type="modified residue" description="Phosphoserine" evidence="19">
    <location>
        <position position="233"/>
    </location>
</feature>
<feature type="modified residue" description="Phosphoserine" evidence="1">
    <location>
        <position position="237"/>
    </location>
</feature>
<feature type="modified residue" description="Phosphoserine; by PKA" evidence="6">
    <location>
        <position position="245"/>
    </location>
</feature>
<feature type="modified residue" description="Phosphoserine; by PKA" evidence="6">
    <location>
        <position position="269"/>
    </location>
</feature>
<feature type="modified residue" description="Phosphoserine; by PKA" evidence="6">
    <location>
        <position position="294"/>
    </location>
</feature>
<feature type="splice variant" id="VSP_053806" description="In isoform 10." evidence="18">
    <location>
        <begin position="1"/>
        <end position="472"/>
    </location>
</feature>
<feature type="splice variant" id="VSP_005590" description="In isoform A-beta, isoform B-beta, isoform C-beta and isoform IB-deltaIX." evidence="13 15 17">
    <original>MPSTSFPVPSKFPLGPAAAVFGRGETLGPAPRAGGTMKSAEE</original>
    <variation>MTGLEDQEFDFEFLFEFNQRDEGAAAAAP</variation>
    <location>
        <begin position="1"/>
        <end position="42"/>
    </location>
</feature>
<feature type="splice variant" id="VSP_018978" description="In isoform A-alpha'." evidence="18">
    <location>
        <begin position="1"/>
        <end position="36"/>
    </location>
</feature>
<feature type="splice variant" id="VSP_047820" description="In isoform IA-deltaIX and isoform IB-deltaIX." evidence="15">
    <location>
        <begin position="698"/>
        <end position="927"/>
    </location>
</feature>
<feature type="splice variant" id="VSP_005591" description="In isoform A-alpha, isoform A-alpha' and isoform A-beta." evidence="13 14 16">
    <original>VPIIKTEPTDDYEPAPTCG</original>
    <variation>GNAIFLTVSREHERVGCFF</variation>
    <location>
        <begin position="698"/>
        <end position="716"/>
    </location>
</feature>
<feature type="splice variant" id="VSP_005592" description="In isoform A-alpha, isoform A-alpha' and isoform A-beta." evidence="13 14 16">
    <location>
        <begin position="717"/>
        <end position="943"/>
    </location>
</feature>
<feature type="splice variant" id="VSP_005593" description="In isoform B-alpha, isoform B-beta and isoform 10." evidence="13 17">
    <location>
        <begin position="826"/>
        <end position="943"/>
    </location>
</feature>
<feature type="sequence variant" id="VAR_057145" description="In dbSNP:rs1051978.">
    <original>P</original>
    <variation>T</variation>
    <location>
        <position position="68"/>
    </location>
</feature>
<feature type="sequence variant" id="VAR_036529" description="In a colorectal cancer sample; somatic mutation; dbSNP:rs779866756." evidence="8">
    <original>A</original>
    <variation>T</variation>
    <location>
        <position position="315"/>
    </location>
</feature>
<feature type="sequence variant" id="VAR_057146" description="In dbSNP:rs754093.">
    <original>C</original>
    <variation>G</variation>
    <location>
        <position position="751"/>
    </location>
</feature>
<feature type="mutagenesis site" description="No effect on subcellular localization.">
    <original>S</original>
    <variation>A</variation>
    <location>
        <position position="169"/>
    </location>
</feature>
<feature type="mutagenesis site" description="Partial nuclear translocation." evidence="5">
    <original>S</original>
    <variation>A</variation>
    <location>
        <position position="172"/>
    </location>
</feature>
<feature type="mutagenesis site" description="No effect on subcellular localization." evidence="5">
    <original>S</original>
    <variation>A</variation>
    <location>
        <position position="187"/>
    </location>
</feature>
<feature type="sequence conflict" description="In Ref. 2; AAC50869." evidence="18" ref="2">
    <original>G</original>
    <variation>S</variation>
    <location>
        <position position="232"/>
    </location>
</feature>
<feature type="sequence conflict" description="In Ref. 1; AAA19601." evidence="18" ref="1">
    <original>R</original>
    <variation>Q</variation>
    <location>
        <position position="235"/>
    </location>
</feature>
<feature type="strand" evidence="20">
    <location>
        <begin position="426"/>
        <end position="432"/>
    </location>
</feature>
<feature type="strand" evidence="20">
    <location>
        <begin position="443"/>
        <end position="445"/>
    </location>
</feature>
<feature type="strand" evidence="20">
    <location>
        <begin position="454"/>
        <end position="456"/>
    </location>
</feature>
<feature type="strand" evidence="20">
    <location>
        <begin position="460"/>
        <end position="465"/>
    </location>
</feature>
<feature type="strand" evidence="20">
    <location>
        <begin position="468"/>
        <end position="470"/>
    </location>
</feature>
<feature type="strand" evidence="20">
    <location>
        <begin position="472"/>
        <end position="480"/>
    </location>
</feature>
<feature type="strand" evidence="20">
    <location>
        <begin position="483"/>
        <end position="485"/>
    </location>
</feature>
<feature type="strand" evidence="20">
    <location>
        <begin position="509"/>
        <end position="511"/>
    </location>
</feature>
<feature type="strand" evidence="20">
    <location>
        <begin position="514"/>
        <end position="521"/>
    </location>
</feature>
<feature type="strand" evidence="20">
    <location>
        <begin position="523"/>
        <end position="525"/>
    </location>
</feature>
<feature type="helix" evidence="20">
    <location>
        <begin position="541"/>
        <end position="545"/>
    </location>
</feature>
<feature type="strand" evidence="21">
    <location>
        <begin position="551"/>
        <end position="553"/>
    </location>
</feature>
<feature type="strand" evidence="20">
    <location>
        <begin position="559"/>
        <end position="570"/>
    </location>
</feature>
<feature type="turn" evidence="20">
    <location>
        <begin position="571"/>
        <end position="573"/>
    </location>
</feature>
<feature type="strand" evidence="20">
    <location>
        <begin position="574"/>
        <end position="586"/>
    </location>
</feature>
<gene>
    <name type="primary">NFATC1</name>
    <name type="synonym">NFAT2</name>
    <name type="synonym">NFATC</name>
</gene>
<keyword id="KW-0002">3D-structure</keyword>
<keyword id="KW-0010">Activator</keyword>
<keyword id="KW-0024">Alternative initiation</keyword>
<keyword id="KW-0025">Alternative splicing</keyword>
<keyword id="KW-0963">Cytoplasm</keyword>
<keyword id="KW-0238">DNA-binding</keyword>
<keyword id="KW-0539">Nucleus</keyword>
<keyword id="KW-0597">Phosphoprotein</keyword>
<keyword id="KW-1267">Proteomics identification</keyword>
<keyword id="KW-1185">Reference proteome</keyword>
<keyword id="KW-0677">Repeat</keyword>
<keyword id="KW-0678">Repressor</keyword>
<keyword id="KW-0804">Transcription</keyword>
<keyword id="KW-0805">Transcription regulation</keyword>
<comment type="function">
    <text evidence="1 4">Plays a role in the inducible expression of cytokine genes in T-cells, especially in the induction of the IL-2 or IL-4 gene transcription. Also controls gene expression in embryonic cardiac cells. Could regulate not only the activation and proliferation but also the differentiation and programmed death of T-lymphocytes as well as lymphoid and non-lymphoid cells (PubMed:10358178). Required for osteoclastogenesis and regulates many genes important for osteoclast differentiation and function (By similarity).</text>
</comment>
<comment type="subunit">
    <text evidence="1 9 12">Member of the multicomponent NFATC transcription complex that consists of at least two components, a pre-existing cytoplasmic component NFATC2 and an inducible nuclear component NFATC1. Other members such as NFATC4, NFATC3 or members of the activating protein-1 family, MAF, GATA4 and Cbp/p300 can also bind the complex. NFATC proteins bind to DNA as monomers (PubMed:9506523). Interacts with HOMER2 and HOMER3; this interaction may compete with calcineurin/PPP3CA-binding and hence prevent NFATC1 dephosphorylation and activation (PubMed:18218901). Interacts with TLE6/GRG6 (By similarity).</text>
</comment>
<comment type="interaction">
    <interactant intactId="EBI-6907210">
        <id>O95644</id>
    </interactant>
    <interactant intactId="EBI-852794">
        <id>P18846</id>
        <label>ATF1</label>
    </interactant>
    <organismsDiffer>false</organismsDiffer>
    <experiments>3</experiments>
</comment>
<comment type="interaction">
    <interactant intactId="EBI-6907210">
        <id>O95644</id>
    </interactant>
    <interactant intactId="EBI-1170906">
        <id>P15336</id>
        <label>ATF2</label>
    </interactant>
    <organismsDiffer>false</organismsDiffer>
    <experiments>2</experiments>
</comment>
<comment type="interaction">
    <interactant intactId="EBI-6907210">
        <id>O95644</id>
    </interactant>
    <interactant intactId="EBI-712767">
        <id>P18847</id>
        <label>ATF3</label>
    </interactant>
    <organismsDiffer>false</organismsDiffer>
    <experiments>2</experiments>
</comment>
<comment type="interaction">
    <interactant intactId="EBI-6907210">
        <id>O95644</id>
    </interactant>
    <interactant intactId="EBI-711855">
        <id>P16220</id>
        <label>CREB1</label>
    </interactant>
    <organismsDiffer>false</organismsDiffer>
    <experiments>3</experiments>
</comment>
<comment type="interaction">
    <interactant intactId="EBI-6907210">
        <id>O95644</id>
    </interactant>
    <interactant intactId="EBI-2293590">
        <id>P31276</id>
        <label>HOXC13</label>
    </interactant>
    <organismsDiffer>false</organismsDiffer>
    <experiments>2</experiments>
</comment>
<comment type="interaction">
    <interactant intactId="EBI-6907210">
        <id>O95644</id>
    </interactant>
    <interactant intactId="EBI-852823">
        <id>P05412</id>
        <label>JUN</label>
    </interactant>
    <organismsDiffer>false</organismsDiffer>
    <experiments>5</experiments>
</comment>
<comment type="interaction">
    <interactant intactId="EBI-6907210">
        <id>O95644</id>
    </interactant>
    <interactant intactId="EBI-539828">
        <id>O15294</id>
        <label>OGT</label>
    </interactant>
    <organismsDiffer>false</organismsDiffer>
    <experiments>2</experiments>
</comment>
<comment type="interaction">
    <interactant intactId="EBI-6907210">
        <id>O95644</id>
    </interactant>
    <interactant intactId="EBI-15637215">
        <id>Q08209-1</id>
        <label>PPP3CA</label>
    </interactant>
    <organismsDiffer>false</organismsDiffer>
    <experiments>4</experiments>
</comment>
<comment type="subcellular location">
    <subcellularLocation>
        <location evidence="7">Cytoplasm</location>
    </subcellularLocation>
    <subcellularLocation>
        <location evidence="7">Nucleus</location>
    </subcellularLocation>
    <text evidence="1 7">Cytoplasmic for the phosphorylated form and nuclear after activation that is controlled by calcineurin-mediated dephosphorylation. Rapid nuclear exit of NFATC is thought to be one mechanism by which cells distinguish between sustained and transient calcium signals. Translocation to the nucleus is increased in the presence of calcium in pre-osteoblasts (By similarity). The subcellular localization of NFATC plays a key role in the regulation of gene transcription (PubMed:16511445). Nuclear translocation of NFATC1 is enhanced in the presence of TNFSF11. Nuclear translocation is decreased in the presence of FBN1 which can bind and sequester TNFSF11 (By similarity).</text>
</comment>
<comment type="alternative products">
    <event type="alternative splicing"/>
    <event type="alternative initiation"/>
    <isoform>
        <id>O95644-1</id>
        <name>C-alpha</name>
        <sequence type="displayed"/>
    </isoform>
    <isoform>
        <id>O95644-2</id>
        <name>A-alpha</name>
        <name>IA-VIII</name>
        <sequence type="described" ref="VSP_005591 VSP_005592"/>
    </isoform>
    <isoform>
        <id>O95644-3</id>
        <name>A-beta</name>
        <name>IB-VIII</name>
        <sequence type="described" ref="VSP_005590 VSP_005591 VSP_005592"/>
    </isoform>
    <isoform>
        <id>O95644-4</id>
        <name>B-alpha</name>
        <name>IA-IXS</name>
        <sequence type="described" ref="VSP_005593"/>
    </isoform>
    <isoform>
        <id>O95644-5</id>
        <name>B-beta</name>
        <name>IB-IXS</name>
        <sequence type="described" ref="VSP_005590 VSP_005593"/>
    </isoform>
    <isoform>
        <id>O95644-6</id>
        <name>C-beta</name>
        <name>IB-IXL</name>
        <sequence type="described" ref="VSP_005590"/>
    </isoform>
    <isoform>
        <id>O95644-8</id>
        <name>A-alpha'</name>
        <sequence type="described" ref="VSP_018978 VSP_005591 VSP_005592"/>
    </isoform>
    <isoform>
        <id>O95644-10</id>
        <name>IA-deltaIX</name>
        <sequence type="described" ref="VSP_047820"/>
    </isoform>
    <isoform>
        <id>O95644-11</id>
        <name>IB-deltaIX</name>
        <sequence type="described" ref="VSP_005590 VSP_047820"/>
    </isoform>
    <isoform>
        <id>O95644-17</id>
        <name>10</name>
        <sequence type="described" ref="VSP_053806 VSP_005593"/>
    </isoform>
    <text>Isoform C-alpha and isoform C-beta are the strongest activator of gene transcription, followed by isoform A-alpha and isoform A-beta, whereas isoform B-alpha and isoform B-beta are the weakest. Isoform B-alpha, isoform B-beta, isoform C-alpha and isoform C-beta, both present in T-cells, can modulate their transcriptional activity.</text>
</comment>
<comment type="tissue specificity">
    <text evidence="10">Expressed in thymus, peripheral leukocytes as T-cells and spleen. Isoforms A are preferentially expressed in effector T-cells (thymus and peripheral leukocytes) whereas isoforms B and isoforms C are preferentially expressed in naive T-cells (spleen). Isoforms B are expressed in naive T-cells after first antigen exposure and isoforms A are expressed in effector T-cells after second antigen exposure. Isoforms IA are widely expressed but not detected in liver nor pancreas, neural expression is strongest in corpus callosum. Isoforms IB are expressed mostly in muscle, cerebellum, placenta and thymus, neural expression in fetal and adult brain, strongest in corpus callosum.</text>
</comment>
<comment type="induction">
    <text>Only isoforms A are inducibly expressed in T lymphocytes upon activation of the T-cell receptor (TCR) complex. Induced after co-addition of phorbol 12-myristate 13-acetate (PMA) and ionomycin. Also induced after co-addition of 12-O-tetradecanoylphorbol-13-acetate (TPA) and ionomycin. Weakly induced with PMA, ionomycin and cyclosporin A.</text>
</comment>
<comment type="domain">
    <text>Rel Similarity Domain (RSD) allows DNA-binding and cooperative interactions with AP1 factors.</text>
</comment>
<comment type="domain">
    <text>The N-terminal transactivation domain (TAD-A) binds to and is activated by Cbp/p300. The dephosphorylated form contains two unmasked nuclear localization signals (NLS), which allow translocation of the protein to the nucleus.</text>
</comment>
<comment type="domain">
    <text>Isoforms C have a C-terminal part with an additional transactivation domain, TAD-B, which acts as a transcriptional activator. Isoforms B have a shorter C-terminal part without complete TAD-B which acts as a transcriptional repressor.</text>
</comment>
<comment type="PTM">
    <text evidence="6 7 11">Phosphorylated by NFATC-kinase and GSK3B; phosphorylation induces NFATC1 nuclear exit and dephosphorylation by calcineurin promotes nuclear import. Phosphorylation by PKA and DYRK2 negatively modulates nuclear accumulation, and promotes subsequent phosphorylation by GSK3B or casein kinase 1.</text>
</comment>
<comment type="miscellaneous">
    <molecule>Isoform A-alpha'</molecule>
    <text evidence="18">Produced by alternative initiation at Met-37 of isoform A-alpha.</text>
</comment>
<name>NFAC1_HUMAN</name>
<evidence type="ECO:0000250" key="1">
    <source>
        <dbReference type="UniProtKB" id="O88942"/>
    </source>
</evidence>
<evidence type="ECO:0000255" key="2">
    <source>
        <dbReference type="PROSITE-ProRule" id="PRU00265"/>
    </source>
</evidence>
<evidence type="ECO:0000256" key="3">
    <source>
        <dbReference type="SAM" id="MobiDB-lite"/>
    </source>
</evidence>
<evidence type="ECO:0000269" key="4">
    <source>
    </source>
</evidence>
<evidence type="ECO:0000269" key="5">
    <source>
    </source>
</evidence>
<evidence type="ECO:0000269" key="6">
    <source>
    </source>
</evidence>
<evidence type="ECO:0000269" key="7">
    <source>
    </source>
</evidence>
<evidence type="ECO:0000269" key="8">
    <source>
    </source>
</evidence>
<evidence type="ECO:0000269" key="9">
    <source>
    </source>
</evidence>
<evidence type="ECO:0000269" key="10">
    <source>
    </source>
</evidence>
<evidence type="ECO:0000269" key="11">
    <source>
    </source>
</evidence>
<evidence type="ECO:0000269" key="12">
    <source>
    </source>
</evidence>
<evidence type="ECO:0000303" key="13">
    <source>
    </source>
</evidence>
<evidence type="ECO:0000303" key="14">
    <source>
    </source>
</evidence>
<evidence type="ECO:0000303" key="15">
    <source>
    </source>
</evidence>
<evidence type="ECO:0000303" key="16">
    <source>
    </source>
</evidence>
<evidence type="ECO:0000303" key="17">
    <source>
    </source>
</evidence>
<evidence type="ECO:0000305" key="18"/>
<evidence type="ECO:0007744" key="19">
    <source>
    </source>
</evidence>
<evidence type="ECO:0007829" key="20">
    <source>
        <dbReference type="PDB" id="1A66"/>
    </source>
</evidence>
<evidence type="ECO:0007829" key="21">
    <source>
        <dbReference type="PDB" id="1NFA"/>
    </source>
</evidence>
<protein>
    <recommendedName>
        <fullName>Nuclear factor of activated T-cells, cytoplasmic 1</fullName>
        <shortName>NF-ATc1</shortName>
        <shortName>NFATc1</shortName>
    </recommendedName>
    <alternativeName>
        <fullName>NFAT transcription complex cytosolic component</fullName>
        <shortName>NF-ATc</shortName>
        <shortName>NFATc</shortName>
    </alternativeName>
</protein>
<proteinExistence type="evidence at protein level"/>
<sequence>MPSTSFPVPSKFPLGPAAAVFGRGETLGPAPRAGGTMKSAEEEHYGYASSNVSPALPLPTAHSTLPAPCHNLQTSTPGIIPPADHPSGYGAALDGGPAGYFLSSGHTRPDGAPALESPRIEITSCLGLYHNNNQFFHDVEVEDVLPSSKRSPSTATLSLPSLEAYRDPSCLSPASSLSSRSCNSEASSYESNYSYPYASPQTSPWQSPCVSPKTTDPEEGFPRGLGACTLLGSPRHSPSTSPRASVTEESWLGARSSRPASPCNKRKYSLNGRQPPYSPHHSPTPSPHGSPRVSVTDDSWLGNTTQYTSSAIVAAINALTTDSSLDLGDGVPVKSRKTTLEQPPSVALKVEPVGEDLGSPPPPADFAPEDYSSFQHIRKGGFCDQYLAVPQHPYQWAKPKPLSPTSYMSPTLPALDWQLPSHSGPYELRIEVQPKSHHRAHYETEGSRGAVKASAGGHPIVQLHGYLENEPLMLQLFIGTADDRLLRPHAFYQVHRITGKTVSTTSHEAILSNTKVLEIPLLPENSMRAVIDCAGILKLRNSDIELRKGETDIGRKNTRVRLVFRVHVPQPSGRTLSLQVASNPIECSQRSAQELPLVEKQSTDSYPVVGGKKMVLSGHNFLQDSKVIFVEKAPDGHHVWEMEAKTDRDLCKPNSLVVEIPPFRNQRITSPVHVSFYVCNGKRKRSQYQRFTYLPANVPIIKTEPTDDYEPAPTCGPVSQGLSPLPRPYYSQQLAMPPDPSSCLVAGFPPCPQRSTLMPAAPGVSPKLHDLSPAAYTKGVASPGHCHLGLPQPAGEAPAVQDVPRPVATHPGSPGQPPPALLPQQVSAPPSSSCPPGLEHSLCPSSPSPPLPPATQEPTCLQPCSPACPPATGRPQHLPSTVRRDESPTAGPRLLPEVHEDGSPNLAPIPVTVKREPEELDQLYLDDVNEIIRNDLSSTSTHS</sequence>
<dbReference type="EMBL" id="U08015">
    <property type="protein sequence ID" value="AAA19601.1"/>
    <property type="molecule type" value="mRNA"/>
</dbReference>
<dbReference type="EMBL" id="U59736">
    <property type="protein sequence ID" value="AAC50869.1"/>
    <property type="molecule type" value="mRNA"/>
</dbReference>
<dbReference type="EMBL" id="U80917">
    <property type="protein sequence ID" value="AAD00450.1"/>
    <property type="molecule type" value="mRNA"/>
</dbReference>
<dbReference type="EMBL" id="U80918">
    <property type="protein sequence ID" value="AAD00451.1"/>
    <property type="molecule type" value="mRNA"/>
</dbReference>
<dbReference type="EMBL" id="U80919">
    <property type="protein sequence ID" value="AAD00452.1"/>
    <property type="molecule type" value="mRNA"/>
</dbReference>
<dbReference type="EMBL" id="EU887559">
    <property type="protein sequence ID" value="ACG55579.1"/>
    <property type="molecule type" value="mRNA"/>
</dbReference>
<dbReference type="EMBL" id="EU887560">
    <property type="protein sequence ID" value="ACG55580.1"/>
    <property type="molecule type" value="mRNA"/>
</dbReference>
<dbReference type="EMBL" id="EU887561">
    <property type="protein sequence ID" value="ACG55581.1"/>
    <property type="molecule type" value="mRNA"/>
</dbReference>
<dbReference type="EMBL" id="EU887562">
    <property type="protein sequence ID" value="ACG55582.1"/>
    <property type="molecule type" value="mRNA"/>
</dbReference>
<dbReference type="EMBL" id="EU887563">
    <property type="protein sequence ID" value="ACG55583.1"/>
    <property type="molecule type" value="mRNA"/>
</dbReference>
<dbReference type="EMBL" id="EU887564">
    <property type="protein sequence ID" value="ACG55584.1"/>
    <property type="molecule type" value="mRNA"/>
</dbReference>
<dbReference type="EMBL" id="EU887565">
    <property type="protein sequence ID" value="ACG55585.1"/>
    <property type="molecule type" value="mRNA"/>
</dbReference>
<dbReference type="EMBL" id="EU887566">
    <property type="protein sequence ID" value="ACG55586.1"/>
    <property type="molecule type" value="mRNA"/>
</dbReference>
<dbReference type="EMBL" id="AC018445">
    <property type="status" value="NOT_ANNOTATED_CDS"/>
    <property type="molecule type" value="Genomic_DNA"/>
</dbReference>
<dbReference type="EMBL" id="AC023090">
    <property type="status" value="NOT_ANNOTATED_CDS"/>
    <property type="molecule type" value="Genomic_DNA"/>
</dbReference>
<dbReference type="EMBL" id="CH471117">
    <property type="protein sequence ID" value="EAW66621.1"/>
    <property type="molecule type" value="Genomic_DNA"/>
</dbReference>
<dbReference type="EMBL" id="CH471117">
    <property type="protein sequence ID" value="EAW66622.1"/>
    <property type="molecule type" value="Genomic_DNA"/>
</dbReference>
<dbReference type="EMBL" id="BC104753">
    <property type="protein sequence ID" value="AAI04754.1"/>
    <property type="molecule type" value="mRNA"/>
</dbReference>
<dbReference type="EMBL" id="BC112243">
    <property type="protein sequence ID" value="AAI12244.1"/>
    <property type="molecule type" value="mRNA"/>
</dbReference>
<dbReference type="CCDS" id="CCDS12015.1">
    <molecule id="O95644-4"/>
</dbReference>
<dbReference type="CCDS" id="CCDS12016.1">
    <molecule id="O95644-17"/>
</dbReference>
<dbReference type="CCDS" id="CCDS32850.1">
    <molecule id="O95644-6"/>
</dbReference>
<dbReference type="CCDS" id="CCDS59326.1">
    <molecule id="O95644-2"/>
</dbReference>
<dbReference type="CCDS" id="CCDS59327.1">
    <molecule id="O95644-5"/>
</dbReference>
<dbReference type="CCDS" id="CCDS62467.1">
    <molecule id="O95644-1"/>
</dbReference>
<dbReference type="CCDS" id="CCDS62468.1">
    <molecule id="O95644-10"/>
</dbReference>
<dbReference type="CCDS" id="CCDS62469.1">
    <molecule id="O95644-11"/>
</dbReference>
<dbReference type="CCDS" id="CCDS62470.1">
    <molecule id="O95644-3"/>
</dbReference>
<dbReference type="PIR" id="S45262">
    <property type="entry name" value="S45262"/>
</dbReference>
<dbReference type="RefSeq" id="NP_001265598.1">
    <molecule id="O95644-1"/>
    <property type="nucleotide sequence ID" value="NM_001278669.2"/>
</dbReference>
<dbReference type="RefSeq" id="NP_001265599.1">
    <molecule id="O95644-10"/>
    <property type="nucleotide sequence ID" value="NM_001278670.2"/>
</dbReference>
<dbReference type="RefSeq" id="NP_001265601.1">
    <molecule id="O95644-11"/>
    <property type="nucleotide sequence ID" value="NM_001278672.2"/>
</dbReference>
<dbReference type="RefSeq" id="NP_001265602.1">
    <property type="nucleotide sequence ID" value="NM_001278673.1"/>
</dbReference>
<dbReference type="RefSeq" id="NP_001265604.1">
    <molecule id="O95644-3"/>
    <property type="nucleotide sequence ID" value="NM_001278675.2"/>
</dbReference>
<dbReference type="RefSeq" id="NP_006153.2">
    <molecule id="O95644-4"/>
    <property type="nucleotide sequence ID" value="NM_006162.4"/>
</dbReference>
<dbReference type="RefSeq" id="NP_765975.1">
    <molecule id="O95644-6"/>
    <property type="nucleotide sequence ID" value="NM_172387.3"/>
</dbReference>
<dbReference type="RefSeq" id="NP_765976.1">
    <molecule id="O95644-17"/>
    <property type="nucleotide sequence ID" value="NM_172388.3"/>
</dbReference>
<dbReference type="RefSeq" id="NP_765977.1">
    <molecule id="O95644-5"/>
    <property type="nucleotide sequence ID" value="NM_172389.3"/>
</dbReference>
<dbReference type="RefSeq" id="NP_765978.1">
    <molecule id="O95644-2"/>
    <property type="nucleotide sequence ID" value="NM_172390.3"/>
</dbReference>
<dbReference type="PDB" id="1A66">
    <property type="method" value="NMR"/>
    <property type="chains" value="A=414-591"/>
</dbReference>
<dbReference type="PDB" id="1NFA">
    <property type="method" value="NMR"/>
    <property type="chains" value="A=416-591"/>
</dbReference>
<dbReference type="PDB" id="5SVE">
    <property type="method" value="X-ray"/>
    <property type="resolution" value="2.60 A"/>
    <property type="chains" value="C=384-400"/>
</dbReference>
<dbReference type="PDBsum" id="1A66"/>
<dbReference type="PDBsum" id="1NFA"/>
<dbReference type="PDBsum" id="5SVE"/>
<dbReference type="SMR" id="O95644"/>
<dbReference type="BioGRID" id="110845">
    <property type="interactions" value="158"/>
</dbReference>
<dbReference type="DIP" id="DIP-44311N"/>
<dbReference type="FunCoup" id="O95644">
    <property type="interactions" value="1959"/>
</dbReference>
<dbReference type="IntAct" id="O95644">
    <property type="interactions" value="63"/>
</dbReference>
<dbReference type="MINT" id="O95644"/>
<dbReference type="STRING" id="9606.ENSP00000389377"/>
<dbReference type="BindingDB" id="O95644"/>
<dbReference type="ChEMBL" id="CHEMBL3876"/>
<dbReference type="DrugBank" id="DB00852">
    <property type="generic name" value="Pseudoephedrine"/>
</dbReference>
<dbReference type="GlyGen" id="O95644">
    <property type="glycosylation" value="3 sites, 1 O-linked glycan (1 site)"/>
</dbReference>
<dbReference type="iPTMnet" id="O95644"/>
<dbReference type="PhosphoSitePlus" id="O95644"/>
<dbReference type="BioMuta" id="NFATC1"/>
<dbReference type="CPTAC" id="CPTAC-983"/>
<dbReference type="jPOST" id="O95644"/>
<dbReference type="MassIVE" id="O95644"/>
<dbReference type="PaxDb" id="9606-ENSP00000389377"/>
<dbReference type="PeptideAtlas" id="O95644"/>
<dbReference type="ProteomicsDB" id="50973">
    <molecule id="O95644-1"/>
</dbReference>
<dbReference type="ProteomicsDB" id="50974">
    <molecule id="O95644-2"/>
</dbReference>
<dbReference type="ProteomicsDB" id="50975">
    <molecule id="O95644-3"/>
</dbReference>
<dbReference type="ProteomicsDB" id="50976">
    <molecule id="O95644-4"/>
</dbReference>
<dbReference type="ProteomicsDB" id="50977">
    <molecule id="O95644-5"/>
</dbReference>
<dbReference type="ProteomicsDB" id="50978">
    <molecule id="O95644-6"/>
</dbReference>
<dbReference type="ProteomicsDB" id="50979">
    <molecule id="O95644-8"/>
</dbReference>
<dbReference type="ProteomicsDB" id="5935"/>
<dbReference type="Antibodypedia" id="3860">
    <property type="antibodies" value="582 antibodies from 41 providers"/>
</dbReference>
<dbReference type="DNASU" id="4772"/>
<dbReference type="Ensembl" id="ENST00000253506.9">
    <molecule id="O95644-4"/>
    <property type="protein sequence ID" value="ENSP00000253506.5"/>
    <property type="gene ID" value="ENSG00000131196.18"/>
</dbReference>
<dbReference type="Ensembl" id="ENST00000318065.9">
    <molecule id="O95644-5"/>
    <property type="protein sequence ID" value="ENSP00000316553.5"/>
    <property type="gene ID" value="ENSG00000131196.18"/>
</dbReference>
<dbReference type="Ensembl" id="ENST00000329101.8">
    <molecule id="O95644-6"/>
    <property type="protein sequence ID" value="ENSP00000327850.3"/>
    <property type="gene ID" value="ENSG00000131196.18"/>
</dbReference>
<dbReference type="Ensembl" id="ENST00000397790.6">
    <molecule id="O95644-17"/>
    <property type="protein sequence ID" value="ENSP00000380892.2"/>
    <property type="gene ID" value="ENSG00000131196.18"/>
</dbReference>
<dbReference type="Ensembl" id="ENST00000427363.7">
    <molecule id="O95644-1"/>
    <property type="protein sequence ID" value="ENSP00000389377.2"/>
    <property type="gene ID" value="ENSG00000131196.18"/>
</dbReference>
<dbReference type="Ensembl" id="ENST00000542384.5">
    <molecule id="O95644-10"/>
    <property type="protein sequence ID" value="ENSP00000442435.1"/>
    <property type="gene ID" value="ENSG00000131196.18"/>
</dbReference>
<dbReference type="Ensembl" id="ENST00000586434.1">
    <molecule id="O95644-11"/>
    <property type="protein sequence ID" value="ENSP00000466489.1"/>
    <property type="gene ID" value="ENSG00000131196.18"/>
</dbReference>
<dbReference type="Ensembl" id="ENST00000591814.5">
    <molecule id="O95644-2"/>
    <property type="protein sequence ID" value="ENSP00000466194.1"/>
    <property type="gene ID" value="ENSG00000131196.18"/>
</dbReference>
<dbReference type="Ensembl" id="ENST00000592223.5">
    <molecule id="O95644-3"/>
    <property type="protein sequence ID" value="ENSP00000467181.1"/>
    <property type="gene ID" value="ENSG00000131196.18"/>
</dbReference>
<dbReference type="GeneID" id="4772"/>
<dbReference type="KEGG" id="hsa:4772"/>
<dbReference type="MANE-Select" id="ENST00000427363.7">
    <property type="protein sequence ID" value="ENSP00000389377.2"/>
    <property type="RefSeq nucleotide sequence ID" value="NM_001278669.2"/>
    <property type="RefSeq protein sequence ID" value="NP_001265598.1"/>
</dbReference>
<dbReference type="UCSC" id="uc002lnc.3">
    <molecule id="O95644-1"/>
    <property type="organism name" value="human"/>
</dbReference>
<dbReference type="AGR" id="HGNC:7775"/>
<dbReference type="CTD" id="4772"/>
<dbReference type="DisGeNET" id="4772"/>
<dbReference type="GeneCards" id="NFATC1"/>
<dbReference type="HGNC" id="HGNC:7775">
    <property type="gene designation" value="NFATC1"/>
</dbReference>
<dbReference type="HPA" id="ENSG00000131196">
    <property type="expression patterns" value="Tissue enhanced (choroid)"/>
</dbReference>
<dbReference type="MalaCards" id="NFATC1"/>
<dbReference type="MIM" id="600489">
    <property type="type" value="gene"/>
</dbReference>
<dbReference type="neXtProt" id="NX_O95644"/>
<dbReference type="OpenTargets" id="ENSG00000131196"/>
<dbReference type="PharmGKB" id="PA31582"/>
<dbReference type="VEuPathDB" id="HostDB:ENSG00000131196"/>
<dbReference type="eggNOG" id="ENOG502QTX8">
    <property type="taxonomic scope" value="Eukaryota"/>
</dbReference>
<dbReference type="GeneTree" id="ENSGT00940000157616"/>
<dbReference type="HOGENOM" id="CLU_010185_1_0_1"/>
<dbReference type="InParanoid" id="O95644"/>
<dbReference type="OMA" id="FVEKAPX"/>
<dbReference type="OrthoDB" id="5346094at2759"/>
<dbReference type="PAN-GO" id="O95644">
    <property type="GO annotations" value="7 GO annotations based on evolutionary models"/>
</dbReference>
<dbReference type="PhylomeDB" id="O95644"/>
<dbReference type="TreeFam" id="TF326480"/>
<dbReference type="PathwayCommons" id="O95644"/>
<dbReference type="Reactome" id="R-HSA-2025928">
    <property type="pathway name" value="Calcineurin activates NFAT"/>
</dbReference>
<dbReference type="Reactome" id="R-HSA-2871809">
    <property type="pathway name" value="FCERI mediated Ca+2 mobilization"/>
</dbReference>
<dbReference type="Reactome" id="R-HSA-4086398">
    <property type="pathway name" value="Ca2+ pathway"/>
</dbReference>
<dbReference type="Reactome" id="R-HSA-5607763">
    <property type="pathway name" value="CLEC7A (Dectin-1) induces NFAT activation"/>
</dbReference>
<dbReference type="SignaLink" id="O95644"/>
<dbReference type="SIGNOR" id="O95644"/>
<dbReference type="BioGRID-ORCS" id="4772">
    <property type="hits" value="16 hits in 1179 CRISPR screens"/>
</dbReference>
<dbReference type="ChiTaRS" id="NFATC1">
    <property type="organism name" value="human"/>
</dbReference>
<dbReference type="EvolutionaryTrace" id="O95644"/>
<dbReference type="GeneWiki" id="NFATC1"/>
<dbReference type="GenomeRNAi" id="4772"/>
<dbReference type="Pharos" id="O95644">
    <property type="development level" value="Tchem"/>
</dbReference>
<dbReference type="PRO" id="PR:O95644"/>
<dbReference type="Proteomes" id="UP000005640">
    <property type="component" value="Chromosome 18"/>
</dbReference>
<dbReference type="RNAct" id="O95644">
    <property type="molecule type" value="protein"/>
</dbReference>
<dbReference type="Bgee" id="ENSG00000131196">
    <property type="expression patterns" value="Expressed in oocyte and 171 other cell types or tissues"/>
</dbReference>
<dbReference type="ExpressionAtlas" id="O95644">
    <property type="expression patterns" value="baseline and differential"/>
</dbReference>
<dbReference type="GO" id="GO:0000785">
    <property type="term" value="C:chromatin"/>
    <property type="evidence" value="ECO:0000314"/>
    <property type="project" value="BHF-UCL"/>
</dbReference>
<dbReference type="GO" id="GO:0005737">
    <property type="term" value="C:cytoplasm"/>
    <property type="evidence" value="ECO:0000250"/>
    <property type="project" value="BHF-UCL"/>
</dbReference>
<dbReference type="GO" id="GO:0005829">
    <property type="term" value="C:cytosol"/>
    <property type="evidence" value="ECO:0000304"/>
    <property type="project" value="Reactome"/>
</dbReference>
<dbReference type="GO" id="GO:0016604">
    <property type="term" value="C:nuclear body"/>
    <property type="evidence" value="ECO:0000314"/>
    <property type="project" value="HPA"/>
</dbReference>
<dbReference type="GO" id="GO:0005654">
    <property type="term" value="C:nucleoplasm"/>
    <property type="evidence" value="ECO:0000314"/>
    <property type="project" value="HPA"/>
</dbReference>
<dbReference type="GO" id="GO:0005634">
    <property type="term" value="C:nucleus"/>
    <property type="evidence" value="ECO:0000314"/>
    <property type="project" value="MGI"/>
</dbReference>
<dbReference type="GO" id="GO:0005667">
    <property type="term" value="C:transcription regulator complex"/>
    <property type="evidence" value="ECO:0000318"/>
    <property type="project" value="GO_Central"/>
</dbReference>
<dbReference type="GO" id="GO:0001228">
    <property type="term" value="F:DNA-binding transcription activator activity, RNA polymerase II-specific"/>
    <property type="evidence" value="ECO:0000250"/>
    <property type="project" value="BHF-UCL"/>
</dbReference>
<dbReference type="GO" id="GO:0003700">
    <property type="term" value="F:DNA-binding transcription factor activity"/>
    <property type="evidence" value="ECO:0000304"/>
    <property type="project" value="ProtInc"/>
</dbReference>
<dbReference type="GO" id="GO:0000981">
    <property type="term" value="F:DNA-binding transcription factor activity, RNA polymerase II-specific"/>
    <property type="evidence" value="ECO:0000250"/>
    <property type="project" value="BHF-UCL"/>
</dbReference>
<dbReference type="GO" id="GO:0005528">
    <property type="term" value="F:FK506 binding"/>
    <property type="evidence" value="ECO:0000304"/>
    <property type="project" value="ProtInc"/>
</dbReference>
<dbReference type="GO" id="GO:0048273">
    <property type="term" value="F:mitogen-activated protein kinase p38 binding"/>
    <property type="evidence" value="ECO:0000250"/>
    <property type="project" value="BHF-UCL"/>
</dbReference>
<dbReference type="GO" id="GO:0030346">
    <property type="term" value="F:protein phosphatase 2B binding"/>
    <property type="evidence" value="ECO:0000353"/>
    <property type="project" value="DisProt"/>
</dbReference>
<dbReference type="GO" id="GO:0000978">
    <property type="term" value="F:RNA polymerase II cis-regulatory region sequence-specific DNA binding"/>
    <property type="evidence" value="ECO:0000250"/>
    <property type="project" value="BHF-UCL"/>
</dbReference>
<dbReference type="GO" id="GO:0061629">
    <property type="term" value="F:RNA polymerase II-specific DNA-binding transcription factor binding"/>
    <property type="evidence" value="ECO:0000250"/>
    <property type="project" value="BHF-UCL"/>
</dbReference>
<dbReference type="GO" id="GO:1990837">
    <property type="term" value="F:sequence-specific double-stranded DNA binding"/>
    <property type="evidence" value="ECO:0000314"/>
    <property type="project" value="ARUK-UCL"/>
</dbReference>
<dbReference type="GO" id="GO:0003180">
    <property type="term" value="P:aortic valve morphogenesis"/>
    <property type="evidence" value="ECO:0000250"/>
    <property type="project" value="BHF-UCL"/>
</dbReference>
<dbReference type="GO" id="GO:0033173">
    <property type="term" value="P:calcineurin-NFAT signaling cascade"/>
    <property type="evidence" value="ECO:0000314"/>
    <property type="project" value="UniProtKB"/>
</dbReference>
<dbReference type="GO" id="GO:0035556">
    <property type="term" value="P:intracellular signal transduction"/>
    <property type="evidence" value="ECO:0000314"/>
    <property type="project" value="MGI"/>
</dbReference>
<dbReference type="GO" id="GO:1905064">
    <property type="term" value="P:negative regulation of vascular associated smooth muscle cell differentiation"/>
    <property type="evidence" value="ECO:0000314"/>
    <property type="project" value="BHF-UCL"/>
</dbReference>
<dbReference type="GO" id="GO:0030178">
    <property type="term" value="P:negative regulation of Wnt signaling pathway"/>
    <property type="evidence" value="ECO:0000250"/>
    <property type="project" value="ParkinsonsUK-UCL"/>
</dbReference>
<dbReference type="GO" id="GO:0045893">
    <property type="term" value="P:positive regulation of DNA-templated transcription"/>
    <property type="evidence" value="ECO:0000314"/>
    <property type="project" value="UniProtKB"/>
</dbReference>
<dbReference type="GO" id="GO:0045944">
    <property type="term" value="P:positive regulation of transcription by RNA polymerase II"/>
    <property type="evidence" value="ECO:0000314"/>
    <property type="project" value="UniProtKB"/>
</dbReference>
<dbReference type="GO" id="GO:0003184">
    <property type="term" value="P:pulmonary valve morphogenesis"/>
    <property type="evidence" value="ECO:0000250"/>
    <property type="project" value="BHF-UCL"/>
</dbReference>
<dbReference type="CDD" id="cd07881">
    <property type="entry name" value="RHD-n_NFAT"/>
    <property type="match status" value="1"/>
</dbReference>
<dbReference type="DisProt" id="DP01724"/>
<dbReference type="FunFam" id="2.60.40.10:FF:000040">
    <property type="entry name" value="Nuclear factor of activated T-cells, cytoplasmic, calcineurin-dependent 2"/>
    <property type="match status" value="1"/>
</dbReference>
<dbReference type="FunFam" id="2.60.40.340:FF:000001">
    <property type="entry name" value="Nuclear factor of activated T-cells, cytoplasmic, calcineurin-dependent 2"/>
    <property type="match status" value="1"/>
</dbReference>
<dbReference type="Gene3D" id="2.60.40.10">
    <property type="entry name" value="Immunoglobulins"/>
    <property type="match status" value="1"/>
</dbReference>
<dbReference type="Gene3D" id="2.60.40.340">
    <property type="entry name" value="Rel homology domain (RHD), DNA-binding domain"/>
    <property type="match status" value="1"/>
</dbReference>
<dbReference type="IDEAL" id="IID00435"/>
<dbReference type="InterPro" id="IPR013783">
    <property type="entry name" value="Ig-like_fold"/>
</dbReference>
<dbReference type="InterPro" id="IPR014756">
    <property type="entry name" value="Ig_E-set"/>
</dbReference>
<dbReference type="InterPro" id="IPR002909">
    <property type="entry name" value="IPT_dom"/>
</dbReference>
<dbReference type="InterPro" id="IPR008366">
    <property type="entry name" value="NFAT"/>
</dbReference>
<dbReference type="InterPro" id="IPR008967">
    <property type="entry name" value="p53-like_TF_DNA-bd_sf"/>
</dbReference>
<dbReference type="InterPro" id="IPR032397">
    <property type="entry name" value="RHD_dimer"/>
</dbReference>
<dbReference type="InterPro" id="IPR011539">
    <property type="entry name" value="RHD_DNA_bind_dom"/>
</dbReference>
<dbReference type="InterPro" id="IPR037059">
    <property type="entry name" value="RHD_DNA_bind_dom_sf"/>
</dbReference>
<dbReference type="PANTHER" id="PTHR12533">
    <property type="entry name" value="NFAT"/>
    <property type="match status" value="1"/>
</dbReference>
<dbReference type="PANTHER" id="PTHR12533:SF5">
    <property type="entry name" value="NUCLEAR FACTOR OF ACTIVATED T-CELLS, CYTOPLASMIC 1"/>
    <property type="match status" value="1"/>
</dbReference>
<dbReference type="Pfam" id="PF16179">
    <property type="entry name" value="RHD_dimer"/>
    <property type="match status" value="1"/>
</dbReference>
<dbReference type="Pfam" id="PF00554">
    <property type="entry name" value="RHD_DNA_bind"/>
    <property type="match status" value="1"/>
</dbReference>
<dbReference type="PRINTS" id="PR01789">
    <property type="entry name" value="NUCFACTORATC"/>
</dbReference>
<dbReference type="SMART" id="SM00429">
    <property type="entry name" value="IPT"/>
    <property type="match status" value="1"/>
</dbReference>
<dbReference type="SUPFAM" id="SSF81296">
    <property type="entry name" value="E set domains"/>
    <property type="match status" value="1"/>
</dbReference>
<dbReference type="SUPFAM" id="SSF49417">
    <property type="entry name" value="p53-like transcription factors"/>
    <property type="match status" value="1"/>
</dbReference>
<dbReference type="PROSITE" id="PS50254">
    <property type="entry name" value="REL_2"/>
    <property type="match status" value="1"/>
</dbReference>
<accession>O95644</accession>
<accession>B5B2M4</accession>
<accession>B5B2M5</accession>
<accession>B5B2M6</accession>
<accession>B5B2M7</accession>
<accession>B5B2M8</accession>
<accession>B5B2M9</accession>
<accession>B5B2N1</accession>
<accession>Q12865</accession>
<accession>Q15793</accession>
<accession>Q2M1S3</accession>
<reference key="1">
    <citation type="journal article" date="1994" name="Nature">
        <title>NF-AT components define a family of transcription factors targeted in T-cell activation.</title>
        <authorList>
            <person name="Northrop J.P."/>
            <person name="Ho S.N."/>
            <person name="Chen L."/>
            <person name="Thomas D.J."/>
            <person name="Timmerman L.A."/>
            <person name="Nolan G.P."/>
            <person name="Admon A."/>
            <person name="Crabtree G.R."/>
        </authorList>
    </citation>
    <scope>NUCLEOTIDE SEQUENCE [MRNA] (ISOFORM A-ALPHA)</scope>
    <source>
        <tissue>Peripheral blood lymphocyte</tissue>
        <tissue>T-cell</tissue>
    </source>
</reference>
<reference key="2">
    <citation type="journal article" date="1996" name="J. Biol. Chem.">
        <title>Characterization of a new isoform of the NFAT (nuclear factor of activated T cells) gene family member NFATc.</title>
        <authorList>
            <person name="Park J."/>
            <person name="Takeuchi A."/>
            <person name="Sharma S."/>
        </authorList>
    </citation>
    <scope>NUCLEOTIDE SEQUENCE [MRNA] (ISOFORM B-BETA)</scope>
    <source>
        <tissue>B-cell</tissue>
    </source>
</reference>
<reference key="3">
    <citation type="journal article" date="1996" name="J. Biol. Chem.">
        <authorList>
            <person name="Park J."/>
            <person name="Takeuchi A."/>
            <person name="Sharma S."/>
        </authorList>
    </citation>
    <scope>ERRATUM OF PUBMED:8702849</scope>
</reference>
<reference key="4">
    <citation type="journal article" date="1999" name="Immunity">
        <title>Alternative polyadenylation events contribute to the induction of NF-ATc in effector T cells.</title>
        <authorList>
            <person name="Chuvpilo S."/>
            <person name="Zimmer M."/>
            <person name="Kerstan A."/>
            <person name="Gloeckner J."/>
            <person name="Avots A."/>
            <person name="Escher C."/>
            <person name="Fischer C."/>
            <person name="Inashkina I."/>
            <person name="Jankevics E."/>
            <person name="Berberich-Siebelt F."/>
            <person name="Schmitt E."/>
            <person name="Serfling E."/>
        </authorList>
    </citation>
    <scope>NUCLEOTIDE SEQUENCE [MRNA] (ISOFORMS A-ALPHA; B-ALPHA AND C-BETA)</scope>
    <source>
        <tissue>B-cell lymphoma</tissue>
    </source>
</reference>
<reference key="5">
    <citation type="journal article" date="2008" name="Genomics">
        <title>Alternative splicing and expression of human and mouse NFAT genes.</title>
        <authorList>
            <person name="Vihma H."/>
            <person name="Pruunsild P."/>
            <person name="Timmusk T."/>
        </authorList>
    </citation>
    <scope>NUCLEOTIDE SEQUENCE [MRNA] (ISOFORMS C-ALPHA; IA-DELTAIX AND IB-DELTAIX)</scope>
    <scope>ALTERNATIVE SPLICING</scope>
    <scope>TISSUE SPECIFICITY</scope>
</reference>
<reference key="6">
    <citation type="journal article" date="2005" name="Nature">
        <title>DNA sequence and analysis of human chromosome 18.</title>
        <authorList>
            <person name="Nusbaum C."/>
            <person name="Zody M.C."/>
            <person name="Borowsky M.L."/>
            <person name="Kamal M."/>
            <person name="Kodira C.D."/>
            <person name="Taylor T.D."/>
            <person name="Whittaker C.A."/>
            <person name="Chang J.L."/>
            <person name="Cuomo C.A."/>
            <person name="Dewar K."/>
            <person name="FitzGerald M.G."/>
            <person name="Yang X."/>
            <person name="Abouelleil A."/>
            <person name="Allen N.R."/>
            <person name="Anderson S."/>
            <person name="Bloom T."/>
            <person name="Bugalter B."/>
            <person name="Butler J."/>
            <person name="Cook A."/>
            <person name="DeCaprio D."/>
            <person name="Engels R."/>
            <person name="Garber M."/>
            <person name="Gnirke A."/>
            <person name="Hafez N."/>
            <person name="Hall J.L."/>
            <person name="Norman C.H."/>
            <person name="Itoh T."/>
            <person name="Jaffe D.B."/>
            <person name="Kuroki Y."/>
            <person name="Lehoczky J."/>
            <person name="Lui A."/>
            <person name="Macdonald P."/>
            <person name="Mauceli E."/>
            <person name="Mikkelsen T.S."/>
            <person name="Naylor J.W."/>
            <person name="Nicol R."/>
            <person name="Nguyen C."/>
            <person name="Noguchi H."/>
            <person name="O'Leary S.B."/>
            <person name="Piqani B."/>
            <person name="Smith C.L."/>
            <person name="Talamas J.A."/>
            <person name="Topham K."/>
            <person name="Totoki Y."/>
            <person name="Toyoda A."/>
            <person name="Wain H.M."/>
            <person name="Young S.K."/>
            <person name="Zeng Q."/>
            <person name="Zimmer A.R."/>
            <person name="Fujiyama A."/>
            <person name="Hattori M."/>
            <person name="Birren B.W."/>
            <person name="Sakaki Y."/>
            <person name="Lander E.S."/>
        </authorList>
    </citation>
    <scope>NUCLEOTIDE SEQUENCE [LARGE SCALE GENOMIC DNA]</scope>
</reference>
<reference key="7">
    <citation type="submission" date="2005-07" db="EMBL/GenBank/DDBJ databases">
        <authorList>
            <person name="Mural R.J."/>
            <person name="Istrail S."/>
            <person name="Sutton G."/>
            <person name="Florea L."/>
            <person name="Halpern A.L."/>
            <person name="Mobarry C.M."/>
            <person name="Lippert R."/>
            <person name="Walenz B."/>
            <person name="Shatkay H."/>
            <person name="Dew I."/>
            <person name="Miller J.R."/>
            <person name="Flanigan M.J."/>
            <person name="Edwards N.J."/>
            <person name="Bolanos R."/>
            <person name="Fasulo D."/>
            <person name="Halldorsson B.V."/>
            <person name="Hannenhalli S."/>
            <person name="Turner R."/>
            <person name="Yooseph S."/>
            <person name="Lu F."/>
            <person name="Nusskern D.R."/>
            <person name="Shue B.C."/>
            <person name="Zheng X.H."/>
            <person name="Zhong F."/>
            <person name="Delcher A.L."/>
            <person name="Huson D.H."/>
            <person name="Kravitz S.A."/>
            <person name="Mouchard L."/>
            <person name="Reinert K."/>
            <person name="Remington K.A."/>
            <person name="Clark A.G."/>
            <person name="Waterman M.S."/>
            <person name="Eichler E.E."/>
            <person name="Adams M.D."/>
            <person name="Hunkapiller M.W."/>
            <person name="Myers E.W."/>
            <person name="Venter J.C."/>
        </authorList>
    </citation>
    <scope>NUCLEOTIDE SEQUENCE [LARGE SCALE GENOMIC DNA]</scope>
</reference>
<reference key="8">
    <citation type="journal article" date="2004" name="Genome Res.">
        <title>The status, quality, and expansion of the NIH full-length cDNA project: the Mammalian Gene Collection (MGC).</title>
        <authorList>
            <consortium name="The MGC Project Team"/>
        </authorList>
    </citation>
    <scope>NUCLEOTIDE SEQUENCE [LARGE SCALE MRNA] (ISOFORM A-ALPHA)</scope>
    <source>
        <tissue>Brain</tissue>
    </source>
</reference>
<reference key="9">
    <citation type="journal article" date="1997" name="Mol. Cell. Biol.">
        <title>Expression of NFAT-family proteins in normal human T cells.</title>
        <authorList>
            <person name="Lyakh L."/>
            <person name="Ghosh P."/>
            <person name="Rice N.R."/>
        </authorList>
    </citation>
    <scope>IDENTIFICATION OF ISOFORM A-ALPHA'</scope>
</reference>
<reference key="10">
    <citation type="journal article" date="1997" name="Science">
        <title>Nuclear export of NF-ATc enhanced by glycogen synthase kinase-3.</title>
        <authorList>
            <person name="Beals C.R."/>
            <person name="Sheridan C.M."/>
            <person name="Turck C.W."/>
            <person name="Gardner P."/>
            <person name="Crabtree G.R."/>
        </authorList>
    </citation>
    <scope>PHOSPHORYLATION BY GSK3B</scope>
</reference>
<reference key="11">
    <citation type="journal article" date="1999" name="Cell">
        <title>Generic signals and specific outcomes: signaling through Ca2+, calcineurin, and NF-AT.</title>
        <authorList>
            <person name="Crabtree G.R."/>
        </authorList>
    </citation>
    <scope>REVIEW</scope>
</reference>
<reference key="12">
    <citation type="journal article" date="1999" name="J. Immunol.">
        <title>Multiple NF-ATc isoforms with individual transcriptional properties are synthesized in T lymphocytes.</title>
        <authorList>
            <person name="Chuvpilo S."/>
            <person name="Avots A."/>
            <person name="Berberich-Siebelt F."/>
            <person name="Gloeckner J."/>
            <person name="Fischer C."/>
            <person name="Kerstan A."/>
            <person name="Escher C."/>
            <person name="Inashkina I."/>
            <person name="Hlubek F."/>
            <person name="Jankevics E."/>
            <person name="Brabletz T."/>
            <person name="Serfling E."/>
        </authorList>
    </citation>
    <scope>ALTERNATIVE SPLICING</scope>
    <scope>CHARACTERIZATION</scope>
    <scope>FUNCTION</scope>
</reference>
<reference key="13">
    <citation type="journal article" date="2000" name="J. Biol. Chem.">
        <title>Identification of amino acid residues and protein kinases involved in the regulation of NFATc subcellular localization.</title>
        <authorList>
            <person name="Porter C.M."/>
            <person name="Havens M.A."/>
            <person name="Clipstone N.A."/>
        </authorList>
    </citation>
    <scope>MUTAGENESIS OF SER-169; SER-172 AND SER-187</scope>
</reference>
<reference key="14">
    <citation type="journal article" date="2002" name="J. Biol. Chem.">
        <title>Protein kinase A negatively modulates the nuclear accumulation of NF-ATc1 by priming for subsequent phosphorylation by glycogen synthase kinase-3.</title>
        <authorList>
            <person name="Sheridan C.M."/>
            <person name="Heist E.K."/>
            <person name="Beals C.R."/>
            <person name="Crabtree G.R."/>
            <person name="Gardner P."/>
        </authorList>
    </citation>
    <scope>PHOSPHORYLATION AT SER-245; SER-269 AND SER-294</scope>
</reference>
<reference key="15">
    <citation type="journal article" date="2006" name="Nature">
        <title>A genome-wide Drosophila RNAi screen identifies DYRK-family kinases as regulators of NFAT.</title>
        <authorList>
            <person name="Gwack Y."/>
            <person name="Sharma S."/>
            <person name="Nardone J."/>
            <person name="Tanasa B."/>
            <person name="Iuga A."/>
            <person name="Srikanth S."/>
            <person name="Okamura H."/>
            <person name="Bolton D."/>
            <person name="Feske S."/>
            <person name="Hogan P.G."/>
            <person name="Rao A."/>
        </authorList>
    </citation>
    <scope>SUBCELLULAR LOCATION</scope>
    <scope>PHOSPHORYLATION</scope>
</reference>
<reference key="16">
    <citation type="journal article" date="2008" name="Science">
        <title>NFAT binding and regulation of T cell activation by the cytoplasmic scaffolding Homer proteins.</title>
        <authorList>
            <person name="Huang G.N."/>
            <person name="Huso D.L."/>
            <person name="Bouyain S."/>
            <person name="Tu J."/>
            <person name="McCorkell K.A."/>
            <person name="May M.J."/>
            <person name="Zhu Y."/>
            <person name="Lutz M."/>
            <person name="Collins S."/>
            <person name="Dehoff M."/>
            <person name="Kang S."/>
            <person name="Whartenby K."/>
            <person name="Powell J."/>
            <person name="Leahy D."/>
            <person name="Worley P.F."/>
        </authorList>
    </citation>
    <scope>INTERACTION WITH HOMER2 AND HOMER3</scope>
</reference>
<reference key="17">
    <citation type="journal article" date="2013" name="J. Proteome Res.">
        <title>Toward a comprehensive characterization of a human cancer cell phosphoproteome.</title>
        <authorList>
            <person name="Zhou H."/>
            <person name="Di Palma S."/>
            <person name="Preisinger C."/>
            <person name="Peng M."/>
            <person name="Polat A.N."/>
            <person name="Heck A.J."/>
            <person name="Mohammed S."/>
        </authorList>
    </citation>
    <scope>PHOSPHORYLATION [LARGE SCALE ANALYSIS] AT SER-233</scope>
    <scope>IDENTIFICATION BY MASS SPECTROMETRY [LARGE SCALE ANALYSIS]</scope>
    <source>
        <tissue>Erythroleukemia</tissue>
    </source>
</reference>
<reference key="18">
    <citation type="journal article" date="1997" name="Nature">
        <title>Unusual Rel-like architecture in the DNA-binding domain of the transcription factor NFATc.</title>
        <authorList>
            <person name="Wolfe S.A."/>
            <person name="Zhou P."/>
            <person name="Dotsch V."/>
            <person name="Chen L."/>
            <person name="You A."/>
            <person name="Ho S.N."/>
            <person name="Crabtree G.R."/>
            <person name="Wagner G."/>
            <person name="Verdine G.L."/>
        </authorList>
    </citation>
    <scope>STRUCTURE BY NMR OF 416-591</scope>
</reference>
<reference key="19">
    <citation type="journal article" date="1998" name="Cell">
        <title>Solution structure of the core NFATC1/DNA complex.</title>
        <authorList>
            <person name="Zhou P."/>
            <person name="Sun L.J."/>
            <person name="Dotsch V."/>
            <person name="Wagner G."/>
            <person name="Verdine G.L."/>
        </authorList>
    </citation>
    <scope>STRUCTURE BY NMR OF 416-591 IN COMPLEX WITH DNA</scope>
</reference>
<reference key="20">
    <citation type="journal article" date="2006" name="Science">
        <title>The consensus coding sequences of human breast and colorectal cancers.</title>
        <authorList>
            <person name="Sjoeblom T."/>
            <person name="Jones S."/>
            <person name="Wood L.D."/>
            <person name="Parsons D.W."/>
            <person name="Lin J."/>
            <person name="Barber T.D."/>
            <person name="Mandelker D."/>
            <person name="Leary R.J."/>
            <person name="Ptak J."/>
            <person name="Silliman N."/>
            <person name="Szabo S."/>
            <person name="Buckhaults P."/>
            <person name="Farrell C."/>
            <person name="Meeh P."/>
            <person name="Markowitz S.D."/>
            <person name="Willis J."/>
            <person name="Dawson D."/>
            <person name="Willson J.K.V."/>
            <person name="Gazdar A.F."/>
            <person name="Hartigan J."/>
            <person name="Wu L."/>
            <person name="Liu C."/>
            <person name="Parmigiani G."/>
            <person name="Park B.H."/>
            <person name="Bachman K.E."/>
            <person name="Papadopoulos N."/>
            <person name="Vogelstein B."/>
            <person name="Kinzler K.W."/>
            <person name="Velculescu V.E."/>
        </authorList>
    </citation>
    <scope>VARIANT [LARGE SCALE ANALYSIS] THR-315</scope>
</reference>